<accession>Q7URW6</accession>
<feature type="chain" id="PRO_0000047947" description="DNA-directed RNA polymerase subunit beta">
    <location>
        <begin position="1"/>
        <end position="1240"/>
    </location>
</feature>
<sequence>MATTTQRRLEPTSIRKFGTGLGQFDLPDLTALQTVSYAAFLQEDAASNARKDHGLESVLREIFPIASYDGNTTLEYLYYELGKPRYTIQECRQLRLTYGRPLRIWLRLNREEPIEEEVYLGDLPIMLGGGEFIINGAERVVVSQLHRSPGVDFVLEQDTTTDRKLPSCRVIPERGSWIEVNVTKKDALTVRIDQSGKFAATMLLRAMDPKYSTDADLLSAFYETGTIKVNGGKDATKIENKIAVDDVVYPSGHERAGEIIVEAGYKITTELSETICNAGVTSVEAMDLPKVPLIFNTLADDNTASHEEALLRIYQRLRPGNPPQLEKARTLFQEKFYDDNRYRLGKVGRFRLNRKLGLGVEETVMTLRPDDMIAAIRYLIDLFDADSGAEIDDIDHLGNRRLRTIDELASEELRKGFLKLRRTVQERMSVKDAQDMTPRSLINPKSVSAAIDFFFGRGELSQVVDQTNPLSQLAHERRLSALGPGGLNRKRAGFEVRDVHISHYGRICPIETPEGTNIGLISSLAIYAGVDDYGFLCTPFRKVIDGKISDETVWLRADEEGESYVAPADTEVKDGALVPGPNMIARFRSDFEIVMPEQVSFMDVAPAQMVGVSAGLIPFLEHDDANRALMGSNMQRQAVPLLVTEPPIVGTGMEREVAKNSAMVVRARRAGKVTYADATRIEIGSDHYPLKKYQGLNERTCQNQKPLITVGDKVEKGQIIADGAATQKGELALGRNVLVGFMSFDGFNYEDAIIISEELVRNDTYTSIHIEDFDVEIRETKLGREEFTRDIPNVSEKALRNLDDTGIVQTGTYVKPGDILVGKVSPKSKTELTPEEKLLHAIFGRAGEDVKNDSLEVPSGIEGIVIDTQKFSRRMSLGEDERKAFERELKQHETEGNEEIASTFESLIRDMEEASGVKLKDSTGTPLADGQDPKFVAERATSFRLELVLEQIEDEEKRKAAEKVHQTQWQNVEQAIDERDRKLNSMKRGDELRSGVLQMVKIYIATKRTISVGDKMAGRHGNKGVIAKILPIEDMPFLPDGTPIQIMLNPLGVPSRMNVGQILETHLGWAGAKLGFQALTPIFDGASESEINDCLAEAGLPAHGKIRLTDGRTGEPMEQETTVGYIYMLKLHHLVDDKVHARSTGPYSLITQQPLGGKARFGGQRFGEMEVWALEAYGAAYILQELLTVKSDDVEGRTKIYESMVKGENTLEAGTPASFDVLTNEIRGLALNMQLEKRPI</sequence>
<evidence type="ECO:0000255" key="1">
    <source>
        <dbReference type="HAMAP-Rule" id="MF_01321"/>
    </source>
</evidence>
<evidence type="ECO:0000305" key="2"/>
<name>RPOB_RHOBA</name>
<gene>
    <name evidence="1" type="primary">rpoB</name>
    <name type="ordered locus">RB5414</name>
</gene>
<keyword id="KW-0240">DNA-directed RNA polymerase</keyword>
<keyword id="KW-0548">Nucleotidyltransferase</keyword>
<keyword id="KW-1185">Reference proteome</keyword>
<keyword id="KW-0804">Transcription</keyword>
<keyword id="KW-0808">Transferase</keyword>
<reference key="1">
    <citation type="journal article" date="2003" name="Proc. Natl. Acad. Sci. U.S.A.">
        <title>Complete genome sequence of the marine planctomycete Pirellula sp. strain 1.</title>
        <authorList>
            <person name="Gloeckner F.O."/>
            <person name="Kube M."/>
            <person name="Bauer M."/>
            <person name="Teeling H."/>
            <person name="Lombardot T."/>
            <person name="Ludwig W."/>
            <person name="Gade D."/>
            <person name="Beck A."/>
            <person name="Borzym K."/>
            <person name="Heitmann K."/>
            <person name="Rabus R."/>
            <person name="Schlesner H."/>
            <person name="Amann R."/>
            <person name="Reinhardt R."/>
        </authorList>
    </citation>
    <scope>NUCLEOTIDE SEQUENCE [LARGE SCALE GENOMIC DNA]</scope>
    <source>
        <strain>DSM 10527 / NCIMB 13988 / SH1</strain>
    </source>
</reference>
<protein>
    <recommendedName>
        <fullName evidence="1">DNA-directed RNA polymerase subunit beta</fullName>
        <shortName evidence="1">RNAP subunit beta</shortName>
        <ecNumber evidence="1">2.7.7.6</ecNumber>
    </recommendedName>
    <alternativeName>
        <fullName evidence="1">RNA polymerase subunit beta</fullName>
    </alternativeName>
    <alternativeName>
        <fullName evidence="1">Transcriptase subunit beta</fullName>
    </alternativeName>
</protein>
<organism>
    <name type="scientific">Rhodopirellula baltica (strain DSM 10527 / NCIMB 13988 / SH1)</name>
    <dbReference type="NCBI Taxonomy" id="243090"/>
    <lineage>
        <taxon>Bacteria</taxon>
        <taxon>Pseudomonadati</taxon>
        <taxon>Planctomycetota</taxon>
        <taxon>Planctomycetia</taxon>
        <taxon>Pirellulales</taxon>
        <taxon>Pirellulaceae</taxon>
        <taxon>Rhodopirellula</taxon>
    </lineage>
</organism>
<dbReference type="EC" id="2.7.7.6" evidence="1"/>
<dbReference type="EMBL" id="BX294142">
    <property type="protein sequence ID" value="CAD74221.1"/>
    <property type="status" value="ALT_INIT"/>
    <property type="molecule type" value="Genomic_DNA"/>
</dbReference>
<dbReference type="RefSeq" id="NP_866682.1">
    <property type="nucleotide sequence ID" value="NC_005027.1"/>
</dbReference>
<dbReference type="RefSeq" id="WP_007340662.1">
    <property type="nucleotide sequence ID" value="NC_005027.1"/>
</dbReference>
<dbReference type="SMR" id="Q7URW6"/>
<dbReference type="FunCoup" id="Q7URW6">
    <property type="interactions" value="527"/>
</dbReference>
<dbReference type="STRING" id="243090.RB5414"/>
<dbReference type="EnsemblBacteria" id="CAD74221">
    <property type="protein sequence ID" value="CAD74221"/>
    <property type="gene ID" value="RB5414"/>
</dbReference>
<dbReference type="KEGG" id="rba:RB5414"/>
<dbReference type="PATRIC" id="fig|243090.15.peg.2600"/>
<dbReference type="eggNOG" id="COG0085">
    <property type="taxonomic scope" value="Bacteria"/>
</dbReference>
<dbReference type="HOGENOM" id="CLU_000524_4_0_0"/>
<dbReference type="InParanoid" id="Q7URW6"/>
<dbReference type="OrthoDB" id="9803954at2"/>
<dbReference type="Proteomes" id="UP000001025">
    <property type="component" value="Chromosome"/>
</dbReference>
<dbReference type="GO" id="GO:0000428">
    <property type="term" value="C:DNA-directed RNA polymerase complex"/>
    <property type="evidence" value="ECO:0007669"/>
    <property type="project" value="UniProtKB-KW"/>
</dbReference>
<dbReference type="GO" id="GO:0003677">
    <property type="term" value="F:DNA binding"/>
    <property type="evidence" value="ECO:0007669"/>
    <property type="project" value="UniProtKB-UniRule"/>
</dbReference>
<dbReference type="GO" id="GO:0003899">
    <property type="term" value="F:DNA-directed RNA polymerase activity"/>
    <property type="evidence" value="ECO:0007669"/>
    <property type="project" value="UniProtKB-UniRule"/>
</dbReference>
<dbReference type="GO" id="GO:0032549">
    <property type="term" value="F:ribonucleoside binding"/>
    <property type="evidence" value="ECO:0007669"/>
    <property type="project" value="InterPro"/>
</dbReference>
<dbReference type="GO" id="GO:0006351">
    <property type="term" value="P:DNA-templated transcription"/>
    <property type="evidence" value="ECO:0007669"/>
    <property type="project" value="UniProtKB-UniRule"/>
</dbReference>
<dbReference type="CDD" id="cd00653">
    <property type="entry name" value="RNA_pol_B_RPB2"/>
    <property type="match status" value="1"/>
</dbReference>
<dbReference type="FunFam" id="3.90.1800.10:FF:000001">
    <property type="entry name" value="DNA-directed RNA polymerase subunit beta"/>
    <property type="match status" value="1"/>
</dbReference>
<dbReference type="Gene3D" id="2.40.50.100">
    <property type="match status" value="1"/>
</dbReference>
<dbReference type="Gene3D" id="2.40.50.150">
    <property type="match status" value="1"/>
</dbReference>
<dbReference type="Gene3D" id="3.90.1100.10">
    <property type="match status" value="2"/>
</dbReference>
<dbReference type="Gene3D" id="2.30.150.10">
    <property type="entry name" value="DNA-directed RNA polymerase, beta subunit, external 1 domain"/>
    <property type="match status" value="1"/>
</dbReference>
<dbReference type="Gene3D" id="2.40.270.10">
    <property type="entry name" value="DNA-directed RNA polymerase, subunit 2, domain 6"/>
    <property type="match status" value="2"/>
</dbReference>
<dbReference type="Gene3D" id="3.90.1800.10">
    <property type="entry name" value="RNA polymerase alpha subunit dimerisation domain"/>
    <property type="match status" value="1"/>
</dbReference>
<dbReference type="Gene3D" id="3.90.1110.10">
    <property type="entry name" value="RNA polymerase Rpb2, domain 2"/>
    <property type="match status" value="1"/>
</dbReference>
<dbReference type="HAMAP" id="MF_01321">
    <property type="entry name" value="RNApol_bact_RpoB"/>
    <property type="match status" value="1"/>
</dbReference>
<dbReference type="InterPro" id="IPR042107">
    <property type="entry name" value="DNA-dir_RNA_pol_bsu_ext_1_sf"/>
</dbReference>
<dbReference type="InterPro" id="IPR019462">
    <property type="entry name" value="DNA-dir_RNA_pol_bsu_external_1"/>
</dbReference>
<dbReference type="InterPro" id="IPR015712">
    <property type="entry name" value="DNA-dir_RNA_pol_su2"/>
</dbReference>
<dbReference type="InterPro" id="IPR007120">
    <property type="entry name" value="DNA-dir_RNAP_su2_dom"/>
</dbReference>
<dbReference type="InterPro" id="IPR037033">
    <property type="entry name" value="DNA-dir_RNAP_su2_hyb_sf"/>
</dbReference>
<dbReference type="InterPro" id="IPR010243">
    <property type="entry name" value="RNA_pol_bsu_bac"/>
</dbReference>
<dbReference type="InterPro" id="IPR007121">
    <property type="entry name" value="RNA_pol_bsu_CS"/>
</dbReference>
<dbReference type="InterPro" id="IPR007644">
    <property type="entry name" value="RNA_pol_bsu_protrusion"/>
</dbReference>
<dbReference type="InterPro" id="IPR007642">
    <property type="entry name" value="RNA_pol_Rpb2_2"/>
</dbReference>
<dbReference type="InterPro" id="IPR037034">
    <property type="entry name" value="RNA_pol_Rpb2_2_sf"/>
</dbReference>
<dbReference type="InterPro" id="IPR007645">
    <property type="entry name" value="RNA_pol_Rpb2_3"/>
</dbReference>
<dbReference type="InterPro" id="IPR007641">
    <property type="entry name" value="RNA_pol_Rpb2_7"/>
</dbReference>
<dbReference type="InterPro" id="IPR014724">
    <property type="entry name" value="RNA_pol_RPB2_OB-fold"/>
</dbReference>
<dbReference type="NCBIfam" id="NF001616">
    <property type="entry name" value="PRK00405.1"/>
    <property type="match status" value="1"/>
</dbReference>
<dbReference type="NCBIfam" id="TIGR02013">
    <property type="entry name" value="rpoB"/>
    <property type="match status" value="1"/>
</dbReference>
<dbReference type="PANTHER" id="PTHR20856">
    <property type="entry name" value="DNA-DIRECTED RNA POLYMERASE I SUBUNIT 2"/>
    <property type="match status" value="1"/>
</dbReference>
<dbReference type="Pfam" id="PF04563">
    <property type="entry name" value="RNA_pol_Rpb2_1"/>
    <property type="match status" value="2"/>
</dbReference>
<dbReference type="Pfam" id="PF04561">
    <property type="entry name" value="RNA_pol_Rpb2_2"/>
    <property type="match status" value="1"/>
</dbReference>
<dbReference type="Pfam" id="PF04565">
    <property type="entry name" value="RNA_pol_Rpb2_3"/>
    <property type="match status" value="1"/>
</dbReference>
<dbReference type="Pfam" id="PF10385">
    <property type="entry name" value="RNA_pol_Rpb2_45"/>
    <property type="match status" value="1"/>
</dbReference>
<dbReference type="Pfam" id="PF00562">
    <property type="entry name" value="RNA_pol_Rpb2_6"/>
    <property type="match status" value="1"/>
</dbReference>
<dbReference type="Pfam" id="PF04560">
    <property type="entry name" value="RNA_pol_Rpb2_7"/>
    <property type="match status" value="1"/>
</dbReference>
<dbReference type="SUPFAM" id="SSF64484">
    <property type="entry name" value="beta and beta-prime subunits of DNA dependent RNA-polymerase"/>
    <property type="match status" value="1"/>
</dbReference>
<dbReference type="PROSITE" id="PS01166">
    <property type="entry name" value="RNA_POL_BETA"/>
    <property type="match status" value="1"/>
</dbReference>
<proteinExistence type="inferred from homology"/>
<comment type="function">
    <text evidence="1">DNA-dependent RNA polymerase catalyzes the transcription of DNA into RNA using the four ribonucleoside triphosphates as substrates.</text>
</comment>
<comment type="catalytic activity">
    <reaction evidence="1">
        <text>RNA(n) + a ribonucleoside 5'-triphosphate = RNA(n+1) + diphosphate</text>
        <dbReference type="Rhea" id="RHEA:21248"/>
        <dbReference type="Rhea" id="RHEA-COMP:14527"/>
        <dbReference type="Rhea" id="RHEA-COMP:17342"/>
        <dbReference type="ChEBI" id="CHEBI:33019"/>
        <dbReference type="ChEBI" id="CHEBI:61557"/>
        <dbReference type="ChEBI" id="CHEBI:140395"/>
        <dbReference type="EC" id="2.7.7.6"/>
    </reaction>
</comment>
<comment type="subunit">
    <text evidence="1">The RNAP catalytic core consists of 2 alpha, 1 beta, 1 beta' and 1 omega subunit. When a sigma factor is associated with the core the holoenzyme is formed, which can initiate transcription.</text>
</comment>
<comment type="similarity">
    <text evidence="1">Belongs to the RNA polymerase beta chain family.</text>
</comment>
<comment type="sequence caution" evidence="2">
    <conflict type="erroneous initiation">
        <sequence resource="EMBL-CDS" id="CAD74221"/>
    </conflict>
</comment>